<reference key="1">
    <citation type="journal article" date="2010" name="J. Bacteriol.">
        <title>Genome sequence of the deep-rooted Yersinia pestis strain Angola reveals new insights into the evolution and pangenome of the plague bacterium.</title>
        <authorList>
            <person name="Eppinger M."/>
            <person name="Worsham P.L."/>
            <person name="Nikolich M.P."/>
            <person name="Riley D.R."/>
            <person name="Sebastian Y."/>
            <person name="Mou S."/>
            <person name="Achtman M."/>
            <person name="Lindler L.E."/>
            <person name="Ravel J."/>
        </authorList>
    </citation>
    <scope>NUCLEOTIDE SEQUENCE [LARGE SCALE GENOMIC DNA]</scope>
    <source>
        <strain>Angola</strain>
    </source>
</reference>
<evidence type="ECO:0000255" key="1">
    <source>
        <dbReference type="HAMAP-Rule" id="MF_00281"/>
    </source>
</evidence>
<accession>A9R0A4</accession>
<feature type="chain" id="PRO_1000114933" description="Phenylalanine--tRNA ligase alpha subunit">
    <location>
        <begin position="1"/>
        <end position="327"/>
    </location>
</feature>
<feature type="binding site" evidence="1">
    <location>
        <position position="252"/>
    </location>
    <ligand>
        <name>Mg(2+)</name>
        <dbReference type="ChEBI" id="CHEBI:18420"/>
        <note>shared with beta subunit</note>
    </ligand>
</feature>
<sequence length="327" mass="37139">MPHLAELVAKAKAAVEGAQDIAALDLVRVEYLGKKGHLTLQMTSLRELPAEERPAAGAVINQAKQEVQEALNARKEKLESAVLNARLAAETIDVSLPGRRMENGGLHPVTRTIERIETFFGELGFSVESGPEIEDDYHNFDALNIPAHHPARADHDTFWFDATRLLRTQTSGVQIRTMQEQQPPIRIIVPGRVYRNDYDQTHTPMFHQMEGLIVDRDISFTNLKGTLHDFLRNFFEEDLQIRFRPSYFPFTEPSAEVDVMGKNGKWLEVLGCGMVHPNVLRNVGIDPEIYSGFAFGMGMERLTMLRYGVTDLRAFFENDLRFLKQFK</sequence>
<organism>
    <name type="scientific">Yersinia pestis bv. Antiqua (strain Angola)</name>
    <dbReference type="NCBI Taxonomy" id="349746"/>
    <lineage>
        <taxon>Bacteria</taxon>
        <taxon>Pseudomonadati</taxon>
        <taxon>Pseudomonadota</taxon>
        <taxon>Gammaproteobacteria</taxon>
        <taxon>Enterobacterales</taxon>
        <taxon>Yersiniaceae</taxon>
        <taxon>Yersinia</taxon>
    </lineage>
</organism>
<keyword id="KW-0030">Aminoacyl-tRNA synthetase</keyword>
<keyword id="KW-0067">ATP-binding</keyword>
<keyword id="KW-0963">Cytoplasm</keyword>
<keyword id="KW-0436">Ligase</keyword>
<keyword id="KW-0460">Magnesium</keyword>
<keyword id="KW-0479">Metal-binding</keyword>
<keyword id="KW-0547">Nucleotide-binding</keyword>
<keyword id="KW-0648">Protein biosynthesis</keyword>
<protein>
    <recommendedName>
        <fullName evidence="1">Phenylalanine--tRNA ligase alpha subunit</fullName>
        <ecNumber evidence="1">6.1.1.20</ecNumber>
    </recommendedName>
    <alternativeName>
        <fullName evidence="1">Phenylalanyl-tRNA synthetase alpha subunit</fullName>
        <shortName evidence="1">PheRS</shortName>
    </alternativeName>
</protein>
<gene>
    <name evidence="1" type="primary">pheS</name>
    <name type="ordered locus">YpAngola_A2621</name>
</gene>
<name>SYFA_YERPG</name>
<proteinExistence type="inferred from homology"/>
<dbReference type="EC" id="6.1.1.20" evidence="1"/>
<dbReference type="EMBL" id="CP000901">
    <property type="protein sequence ID" value="ABX85229.1"/>
    <property type="molecule type" value="Genomic_DNA"/>
</dbReference>
<dbReference type="RefSeq" id="WP_002211832.1">
    <property type="nucleotide sequence ID" value="NZ_CP009935.1"/>
</dbReference>
<dbReference type="SMR" id="A9R0A4"/>
<dbReference type="GeneID" id="57976248"/>
<dbReference type="KEGG" id="ypg:YpAngola_A2621"/>
<dbReference type="PATRIC" id="fig|349746.12.peg.3648"/>
<dbReference type="GO" id="GO:0005737">
    <property type="term" value="C:cytoplasm"/>
    <property type="evidence" value="ECO:0007669"/>
    <property type="project" value="UniProtKB-SubCell"/>
</dbReference>
<dbReference type="GO" id="GO:0005524">
    <property type="term" value="F:ATP binding"/>
    <property type="evidence" value="ECO:0007669"/>
    <property type="project" value="UniProtKB-UniRule"/>
</dbReference>
<dbReference type="GO" id="GO:0000287">
    <property type="term" value="F:magnesium ion binding"/>
    <property type="evidence" value="ECO:0007669"/>
    <property type="project" value="UniProtKB-UniRule"/>
</dbReference>
<dbReference type="GO" id="GO:0004826">
    <property type="term" value="F:phenylalanine-tRNA ligase activity"/>
    <property type="evidence" value="ECO:0007669"/>
    <property type="project" value="UniProtKB-UniRule"/>
</dbReference>
<dbReference type="GO" id="GO:0000049">
    <property type="term" value="F:tRNA binding"/>
    <property type="evidence" value="ECO:0007669"/>
    <property type="project" value="InterPro"/>
</dbReference>
<dbReference type="GO" id="GO:0006432">
    <property type="term" value="P:phenylalanyl-tRNA aminoacylation"/>
    <property type="evidence" value="ECO:0007669"/>
    <property type="project" value="UniProtKB-UniRule"/>
</dbReference>
<dbReference type="CDD" id="cd00496">
    <property type="entry name" value="PheRS_alpha_core"/>
    <property type="match status" value="1"/>
</dbReference>
<dbReference type="FunFam" id="3.30.930.10:FF:000003">
    <property type="entry name" value="Phenylalanine--tRNA ligase alpha subunit"/>
    <property type="match status" value="1"/>
</dbReference>
<dbReference type="Gene3D" id="3.30.930.10">
    <property type="entry name" value="Bira Bifunctional Protein, Domain 2"/>
    <property type="match status" value="1"/>
</dbReference>
<dbReference type="HAMAP" id="MF_00281">
    <property type="entry name" value="Phe_tRNA_synth_alpha1"/>
    <property type="match status" value="1"/>
</dbReference>
<dbReference type="InterPro" id="IPR006195">
    <property type="entry name" value="aa-tRNA-synth_II"/>
</dbReference>
<dbReference type="InterPro" id="IPR045864">
    <property type="entry name" value="aa-tRNA-synth_II/BPL/LPL"/>
</dbReference>
<dbReference type="InterPro" id="IPR004529">
    <property type="entry name" value="Phe-tRNA-synth_IIc_asu"/>
</dbReference>
<dbReference type="InterPro" id="IPR004188">
    <property type="entry name" value="Phe-tRNA_ligase_II_N"/>
</dbReference>
<dbReference type="InterPro" id="IPR022911">
    <property type="entry name" value="Phe_tRNA_ligase_alpha1_bac"/>
</dbReference>
<dbReference type="InterPro" id="IPR002319">
    <property type="entry name" value="Phenylalanyl-tRNA_Synthase"/>
</dbReference>
<dbReference type="InterPro" id="IPR010978">
    <property type="entry name" value="tRNA-bd_arm"/>
</dbReference>
<dbReference type="NCBIfam" id="TIGR00468">
    <property type="entry name" value="pheS"/>
    <property type="match status" value="1"/>
</dbReference>
<dbReference type="PANTHER" id="PTHR11538:SF41">
    <property type="entry name" value="PHENYLALANINE--TRNA LIGASE, MITOCHONDRIAL"/>
    <property type="match status" value="1"/>
</dbReference>
<dbReference type="PANTHER" id="PTHR11538">
    <property type="entry name" value="PHENYLALANYL-TRNA SYNTHETASE"/>
    <property type="match status" value="1"/>
</dbReference>
<dbReference type="Pfam" id="PF02912">
    <property type="entry name" value="Phe_tRNA-synt_N"/>
    <property type="match status" value="1"/>
</dbReference>
<dbReference type="Pfam" id="PF01409">
    <property type="entry name" value="tRNA-synt_2d"/>
    <property type="match status" value="1"/>
</dbReference>
<dbReference type="SUPFAM" id="SSF55681">
    <property type="entry name" value="Class II aaRS and biotin synthetases"/>
    <property type="match status" value="1"/>
</dbReference>
<dbReference type="SUPFAM" id="SSF46589">
    <property type="entry name" value="tRNA-binding arm"/>
    <property type="match status" value="1"/>
</dbReference>
<dbReference type="PROSITE" id="PS50862">
    <property type="entry name" value="AA_TRNA_LIGASE_II"/>
    <property type="match status" value="1"/>
</dbReference>
<comment type="catalytic activity">
    <reaction evidence="1">
        <text>tRNA(Phe) + L-phenylalanine + ATP = L-phenylalanyl-tRNA(Phe) + AMP + diphosphate + H(+)</text>
        <dbReference type="Rhea" id="RHEA:19413"/>
        <dbReference type="Rhea" id="RHEA-COMP:9668"/>
        <dbReference type="Rhea" id="RHEA-COMP:9699"/>
        <dbReference type="ChEBI" id="CHEBI:15378"/>
        <dbReference type="ChEBI" id="CHEBI:30616"/>
        <dbReference type="ChEBI" id="CHEBI:33019"/>
        <dbReference type="ChEBI" id="CHEBI:58095"/>
        <dbReference type="ChEBI" id="CHEBI:78442"/>
        <dbReference type="ChEBI" id="CHEBI:78531"/>
        <dbReference type="ChEBI" id="CHEBI:456215"/>
        <dbReference type="EC" id="6.1.1.20"/>
    </reaction>
</comment>
<comment type="cofactor">
    <cofactor evidence="1">
        <name>Mg(2+)</name>
        <dbReference type="ChEBI" id="CHEBI:18420"/>
    </cofactor>
    <text evidence="1">Binds 2 magnesium ions per tetramer.</text>
</comment>
<comment type="subunit">
    <text evidence="1">Tetramer of two alpha and two beta subunits.</text>
</comment>
<comment type="subcellular location">
    <subcellularLocation>
        <location evidence="1">Cytoplasm</location>
    </subcellularLocation>
</comment>
<comment type="similarity">
    <text evidence="1">Belongs to the class-II aminoacyl-tRNA synthetase family. Phe-tRNA synthetase alpha subunit type 1 subfamily.</text>
</comment>